<proteinExistence type="inferred from homology"/>
<organism>
    <name type="scientific">Citrifermentans bemidjiense (strain ATCC BAA-1014 / DSM 16622 / JCM 12645 / Bem)</name>
    <name type="common">Geobacter bemidjiensis</name>
    <dbReference type="NCBI Taxonomy" id="404380"/>
    <lineage>
        <taxon>Bacteria</taxon>
        <taxon>Pseudomonadati</taxon>
        <taxon>Thermodesulfobacteriota</taxon>
        <taxon>Desulfuromonadia</taxon>
        <taxon>Geobacterales</taxon>
        <taxon>Geobacteraceae</taxon>
        <taxon>Citrifermentans</taxon>
    </lineage>
</organism>
<dbReference type="EMBL" id="CP001124">
    <property type="protein sequence ID" value="ACH38318.1"/>
    <property type="molecule type" value="Genomic_DNA"/>
</dbReference>
<dbReference type="RefSeq" id="WP_012529730.1">
    <property type="nucleotide sequence ID" value="NC_011146.1"/>
</dbReference>
<dbReference type="SMR" id="B5EI54"/>
<dbReference type="STRING" id="404380.Gbem_1299"/>
<dbReference type="KEGG" id="gbm:Gbem_1299"/>
<dbReference type="eggNOG" id="COG0779">
    <property type="taxonomic scope" value="Bacteria"/>
</dbReference>
<dbReference type="HOGENOM" id="CLU_070525_2_2_7"/>
<dbReference type="OrthoDB" id="9805006at2"/>
<dbReference type="Proteomes" id="UP000008825">
    <property type="component" value="Chromosome"/>
</dbReference>
<dbReference type="GO" id="GO:0005829">
    <property type="term" value="C:cytosol"/>
    <property type="evidence" value="ECO:0007669"/>
    <property type="project" value="TreeGrafter"/>
</dbReference>
<dbReference type="GO" id="GO:0000028">
    <property type="term" value="P:ribosomal small subunit assembly"/>
    <property type="evidence" value="ECO:0007669"/>
    <property type="project" value="TreeGrafter"/>
</dbReference>
<dbReference type="GO" id="GO:0006412">
    <property type="term" value="P:translation"/>
    <property type="evidence" value="ECO:0007669"/>
    <property type="project" value="TreeGrafter"/>
</dbReference>
<dbReference type="CDD" id="cd01734">
    <property type="entry name" value="YlxS_C"/>
    <property type="match status" value="1"/>
</dbReference>
<dbReference type="FunFam" id="3.30.300.70:FF:000001">
    <property type="entry name" value="Ribosome maturation factor RimP"/>
    <property type="match status" value="1"/>
</dbReference>
<dbReference type="Gene3D" id="2.30.30.180">
    <property type="entry name" value="Ribosome maturation factor RimP, C-terminal domain"/>
    <property type="match status" value="1"/>
</dbReference>
<dbReference type="Gene3D" id="3.30.300.70">
    <property type="entry name" value="RimP-like superfamily, N-terminal"/>
    <property type="match status" value="1"/>
</dbReference>
<dbReference type="HAMAP" id="MF_01077">
    <property type="entry name" value="RimP"/>
    <property type="match status" value="1"/>
</dbReference>
<dbReference type="InterPro" id="IPR003728">
    <property type="entry name" value="Ribosome_maturation_RimP"/>
</dbReference>
<dbReference type="InterPro" id="IPR028998">
    <property type="entry name" value="RimP_C"/>
</dbReference>
<dbReference type="InterPro" id="IPR036847">
    <property type="entry name" value="RimP_C_sf"/>
</dbReference>
<dbReference type="InterPro" id="IPR028989">
    <property type="entry name" value="RimP_N"/>
</dbReference>
<dbReference type="InterPro" id="IPR035956">
    <property type="entry name" value="RimP_N_sf"/>
</dbReference>
<dbReference type="NCBIfam" id="NF011241">
    <property type="entry name" value="PRK14647.1"/>
    <property type="match status" value="1"/>
</dbReference>
<dbReference type="PANTHER" id="PTHR33867">
    <property type="entry name" value="RIBOSOME MATURATION FACTOR RIMP"/>
    <property type="match status" value="1"/>
</dbReference>
<dbReference type="PANTHER" id="PTHR33867:SF1">
    <property type="entry name" value="RIBOSOME MATURATION FACTOR RIMP"/>
    <property type="match status" value="1"/>
</dbReference>
<dbReference type="Pfam" id="PF17384">
    <property type="entry name" value="DUF150_C"/>
    <property type="match status" value="1"/>
</dbReference>
<dbReference type="Pfam" id="PF02576">
    <property type="entry name" value="RimP_N"/>
    <property type="match status" value="1"/>
</dbReference>
<dbReference type="SUPFAM" id="SSF74942">
    <property type="entry name" value="YhbC-like, C-terminal domain"/>
    <property type="match status" value="1"/>
</dbReference>
<dbReference type="SUPFAM" id="SSF75420">
    <property type="entry name" value="YhbC-like, N-terminal domain"/>
    <property type="match status" value="1"/>
</dbReference>
<feature type="chain" id="PRO_1000136767" description="Ribosome maturation factor RimP">
    <location>
        <begin position="1"/>
        <end position="160"/>
    </location>
</feature>
<sequence length="160" mass="17888">MAKVDVVERVTEIIAEVGAPLGIELVDLEYKREGRDMVVRVFLEKREGGINLDDCADVSRQLSDILDVEDFMPERYTLEVSSPGICRPLKKVADYERFLGHLIKVKTFEMLADEAGNKRKTFTGKLTGIADGVIGIDLTEGQKARVPLDKVAKANLEFEF</sequence>
<comment type="function">
    <text evidence="1">Required for maturation of 30S ribosomal subunits.</text>
</comment>
<comment type="subcellular location">
    <subcellularLocation>
        <location evidence="1">Cytoplasm</location>
    </subcellularLocation>
</comment>
<comment type="similarity">
    <text evidence="1">Belongs to the RimP family.</text>
</comment>
<protein>
    <recommendedName>
        <fullName evidence="1">Ribosome maturation factor RimP</fullName>
    </recommendedName>
</protein>
<name>RIMP_CITBB</name>
<accession>B5EI54</accession>
<keyword id="KW-0963">Cytoplasm</keyword>
<keyword id="KW-1185">Reference proteome</keyword>
<keyword id="KW-0690">Ribosome biogenesis</keyword>
<gene>
    <name evidence="1" type="primary">rimP</name>
    <name type="ordered locus">Gbem_1299</name>
</gene>
<reference key="1">
    <citation type="submission" date="2008-07" db="EMBL/GenBank/DDBJ databases">
        <title>Complete sequence of Geobacter bemidjiensis BEM.</title>
        <authorList>
            <consortium name="US DOE Joint Genome Institute"/>
            <person name="Lucas S."/>
            <person name="Copeland A."/>
            <person name="Lapidus A."/>
            <person name="Glavina del Rio T."/>
            <person name="Dalin E."/>
            <person name="Tice H."/>
            <person name="Bruce D."/>
            <person name="Goodwin L."/>
            <person name="Pitluck S."/>
            <person name="Kiss H."/>
            <person name="Brettin T."/>
            <person name="Detter J.C."/>
            <person name="Han C."/>
            <person name="Kuske C.R."/>
            <person name="Schmutz J."/>
            <person name="Larimer F."/>
            <person name="Land M."/>
            <person name="Hauser L."/>
            <person name="Kyrpides N."/>
            <person name="Lykidis A."/>
            <person name="Lovley D."/>
            <person name="Richardson P."/>
        </authorList>
    </citation>
    <scope>NUCLEOTIDE SEQUENCE [LARGE SCALE GENOMIC DNA]</scope>
    <source>
        <strain>ATCC BAA-1014 / DSM 16622 / JCM 12645 / Bem</strain>
    </source>
</reference>
<evidence type="ECO:0000255" key="1">
    <source>
        <dbReference type="HAMAP-Rule" id="MF_01077"/>
    </source>
</evidence>